<comment type="function">
    <text evidence="1">Beta-bungarotoxin is a presynaptic neurotoxin of the venom. The B chain is homologous to venom basic protease inhibitors but has no protease inhibitor activity and is non-toxic (By similarity).</text>
</comment>
<comment type="subunit">
    <text evidence="1">Heterodimer; disulfide-linked. The A chain has phospholipase A2 activity and the B chain shows homology with the basic protease inhibitors (By similarity).</text>
</comment>
<comment type="subcellular location">
    <subcellularLocation>
        <location evidence="1">Secreted</location>
    </subcellularLocation>
</comment>
<comment type="tissue specificity">
    <text>Expressed by the venom gland.</text>
</comment>
<comment type="similarity">
    <text evidence="3">Belongs to the venom Kunitz-type family.</text>
</comment>
<accession>Q75S50</accession>
<dbReference type="EMBL" id="AB158300">
    <property type="protein sequence ID" value="BAD06268.1"/>
    <property type="molecule type" value="mRNA"/>
</dbReference>
<dbReference type="SMR" id="Q75S50"/>
<dbReference type="GO" id="GO:0005615">
    <property type="term" value="C:extracellular space"/>
    <property type="evidence" value="ECO:0007669"/>
    <property type="project" value="TreeGrafter"/>
</dbReference>
<dbReference type="GO" id="GO:0004867">
    <property type="term" value="F:serine-type endopeptidase inhibitor activity"/>
    <property type="evidence" value="ECO:0007669"/>
    <property type="project" value="InterPro"/>
</dbReference>
<dbReference type="GO" id="GO:0090729">
    <property type="term" value="F:toxin activity"/>
    <property type="evidence" value="ECO:0007669"/>
    <property type="project" value="UniProtKB-KW"/>
</dbReference>
<dbReference type="CDD" id="cd22619">
    <property type="entry name" value="Kunitz_B2B"/>
    <property type="match status" value="1"/>
</dbReference>
<dbReference type="Gene3D" id="4.10.410.10">
    <property type="entry name" value="Pancreatic trypsin inhibitor Kunitz domain"/>
    <property type="match status" value="1"/>
</dbReference>
<dbReference type="InterPro" id="IPR002223">
    <property type="entry name" value="Kunitz_BPTI"/>
</dbReference>
<dbReference type="InterPro" id="IPR036880">
    <property type="entry name" value="Kunitz_BPTI_sf"/>
</dbReference>
<dbReference type="InterPro" id="IPR020901">
    <property type="entry name" value="Prtase_inh_Kunz-CS"/>
</dbReference>
<dbReference type="InterPro" id="IPR050098">
    <property type="entry name" value="TFPI/VKTCI-like"/>
</dbReference>
<dbReference type="PANTHER" id="PTHR10083:SF374">
    <property type="entry name" value="BPTI_KUNITZ INHIBITOR DOMAIN-CONTAINING PROTEIN"/>
    <property type="match status" value="1"/>
</dbReference>
<dbReference type="PANTHER" id="PTHR10083">
    <property type="entry name" value="KUNITZ-TYPE PROTEASE INHIBITOR-RELATED"/>
    <property type="match status" value="1"/>
</dbReference>
<dbReference type="Pfam" id="PF00014">
    <property type="entry name" value="Kunitz_BPTI"/>
    <property type="match status" value="1"/>
</dbReference>
<dbReference type="PRINTS" id="PR00759">
    <property type="entry name" value="BASICPTASE"/>
</dbReference>
<dbReference type="SMART" id="SM00131">
    <property type="entry name" value="KU"/>
    <property type="match status" value="1"/>
</dbReference>
<dbReference type="SUPFAM" id="SSF57362">
    <property type="entry name" value="BPTI-like"/>
    <property type="match status" value="1"/>
</dbReference>
<dbReference type="PROSITE" id="PS00280">
    <property type="entry name" value="BPTI_KUNITZ_1"/>
    <property type="match status" value="1"/>
</dbReference>
<dbReference type="PROSITE" id="PS50279">
    <property type="entry name" value="BPTI_KUNITZ_2"/>
    <property type="match status" value="1"/>
</dbReference>
<proteinExistence type="evidence at transcript level"/>
<sequence>MSSGGLLLLLGLLTLWAELTPVSSRKRHPDCDKPPDTRICQTVVRAFYYKPSEKRCVQFRYGGCKGNGNHFKSDHLCRCECLEYR</sequence>
<evidence type="ECO:0000250" key="1"/>
<evidence type="ECO:0000255" key="2">
    <source>
        <dbReference type="PROSITE-ProRule" id="PRU00031"/>
    </source>
</evidence>
<evidence type="ECO:0000305" key="3"/>
<reference key="1">
    <citation type="journal article" date="2006" name="Toxicon">
        <title>Molecular cloning of the major lethal toxins from two kraits (Bungarus flaviceps and Bungarus candidus).</title>
        <authorList>
            <person name="Yanoshita R."/>
            <person name="Ogawa Y."/>
            <person name="Murayama N."/>
            <person name="Omori-Satoh T."/>
            <person name="Saguchi K."/>
            <person name="Higuchi S."/>
            <person name="Khow O."/>
            <person name="Chanhome L."/>
            <person name="Samejima Y."/>
            <person name="Sitprija V."/>
        </authorList>
    </citation>
    <scope>NUCLEOTIDE SEQUENCE [MRNA]</scope>
    <source>
        <tissue>Venom gland</tissue>
    </source>
</reference>
<organism>
    <name type="scientific">Bungarus candidus</name>
    <name type="common">Malayan krait</name>
    <dbReference type="NCBI Taxonomy" id="92438"/>
    <lineage>
        <taxon>Eukaryota</taxon>
        <taxon>Metazoa</taxon>
        <taxon>Chordata</taxon>
        <taxon>Craniata</taxon>
        <taxon>Vertebrata</taxon>
        <taxon>Euteleostomi</taxon>
        <taxon>Lepidosauria</taxon>
        <taxon>Squamata</taxon>
        <taxon>Bifurcata</taxon>
        <taxon>Unidentata</taxon>
        <taxon>Episquamata</taxon>
        <taxon>Toxicofera</taxon>
        <taxon>Serpentes</taxon>
        <taxon>Colubroidea</taxon>
        <taxon>Elapidae</taxon>
        <taxon>Bungarinae</taxon>
        <taxon>Bungarus</taxon>
    </lineage>
</organism>
<protein>
    <recommendedName>
        <fullName>Kunitz-type serine protease inhibitor homolog beta-bungarotoxin B3 chain</fullName>
    </recommendedName>
</protein>
<keyword id="KW-1015">Disulfide bond</keyword>
<keyword id="KW-0528">Neurotoxin</keyword>
<keyword id="KW-0638">Presynaptic neurotoxin</keyword>
<keyword id="KW-0964">Secreted</keyword>
<keyword id="KW-0732">Signal</keyword>
<keyword id="KW-0800">Toxin</keyword>
<name>VKTH3_BUNCA</name>
<feature type="signal peptide" evidence="1">
    <location>
        <begin position="1"/>
        <end position="24"/>
    </location>
</feature>
<feature type="chain" id="PRO_5000051028" description="Kunitz-type serine protease inhibitor homolog beta-bungarotoxin B3 chain">
    <location>
        <begin position="25"/>
        <end position="85"/>
    </location>
</feature>
<feature type="domain" description="BPTI/Kunitz inhibitor" evidence="2">
    <location>
        <begin position="31"/>
        <end position="81"/>
    </location>
</feature>
<feature type="disulfide bond" evidence="2">
    <location>
        <begin position="31"/>
        <end position="81"/>
    </location>
</feature>
<feature type="disulfide bond" evidence="2">
    <location>
        <begin position="40"/>
        <end position="64"/>
    </location>
</feature>
<feature type="disulfide bond" evidence="2">
    <location>
        <begin position="56"/>
        <end position="77"/>
    </location>
</feature>
<feature type="disulfide bond" description="Interchain (with an A chain)" evidence="2">
    <location>
        <position position="79"/>
    </location>
</feature>